<name>CHH_PENSC</name>
<feature type="chain" id="PRO_0000209858" description="Crustacean hyperglycemic hormone">
    <location>
        <begin position="1"/>
        <end position="72"/>
    </location>
</feature>
<feature type="modified residue" description="Valine amide" evidence="2">
    <location>
        <position position="72"/>
    </location>
</feature>
<feature type="disulfide bond" evidence="1">
    <location>
        <begin position="7"/>
        <end position="43"/>
    </location>
</feature>
<feature type="disulfide bond" evidence="1">
    <location>
        <begin position="23"/>
        <end position="39"/>
    </location>
</feature>
<feature type="disulfide bond" evidence="1">
    <location>
        <begin position="26"/>
        <end position="52"/>
    </location>
</feature>
<proteinExistence type="evidence at protein level"/>
<organism>
    <name type="scientific">Penaeus schmitti</name>
    <name type="common">White shrimp</name>
    <name type="synonym">Litopenaeus schmitti</name>
    <dbReference type="NCBI Taxonomy" id="122378"/>
    <lineage>
        <taxon>Eukaryota</taxon>
        <taxon>Metazoa</taxon>
        <taxon>Ecdysozoa</taxon>
        <taxon>Arthropoda</taxon>
        <taxon>Crustacea</taxon>
        <taxon>Multicrustacea</taxon>
        <taxon>Malacostraca</taxon>
        <taxon>Eumalacostraca</taxon>
        <taxon>Eucarida</taxon>
        <taxon>Decapoda</taxon>
        <taxon>Dendrobranchiata</taxon>
        <taxon>Penaeoidea</taxon>
        <taxon>Penaeidae</taxon>
        <taxon>Penaeus</taxon>
    </lineage>
</organism>
<dbReference type="SMR" id="P59685"/>
<dbReference type="GO" id="GO:0005576">
    <property type="term" value="C:extracellular region"/>
    <property type="evidence" value="ECO:0007669"/>
    <property type="project" value="UniProtKB-SubCell"/>
</dbReference>
<dbReference type="GO" id="GO:0005184">
    <property type="term" value="F:neuropeptide hormone activity"/>
    <property type="evidence" value="ECO:0007669"/>
    <property type="project" value="InterPro"/>
</dbReference>
<dbReference type="GO" id="GO:0007623">
    <property type="term" value="P:circadian rhythm"/>
    <property type="evidence" value="ECO:0007669"/>
    <property type="project" value="TreeGrafter"/>
</dbReference>
<dbReference type="GO" id="GO:0006006">
    <property type="term" value="P:glucose metabolic process"/>
    <property type="evidence" value="ECO:0007669"/>
    <property type="project" value="UniProtKB-KW"/>
</dbReference>
<dbReference type="GO" id="GO:0007218">
    <property type="term" value="P:neuropeptide signaling pathway"/>
    <property type="evidence" value="ECO:0007669"/>
    <property type="project" value="UniProtKB-KW"/>
</dbReference>
<dbReference type="Gene3D" id="1.10.2010.10">
    <property type="entry name" value="Crustacean CHH/MIH/GIH neurohormone"/>
    <property type="match status" value="1"/>
</dbReference>
<dbReference type="InterPro" id="IPR018251">
    <property type="entry name" value="Crust_neurhormone_CS"/>
</dbReference>
<dbReference type="InterPro" id="IPR031098">
    <property type="entry name" value="Crust_neurohorm"/>
</dbReference>
<dbReference type="InterPro" id="IPR035957">
    <property type="entry name" value="Crust_neurohorm_sf"/>
</dbReference>
<dbReference type="InterPro" id="IPR001166">
    <property type="entry name" value="Hyperglycemic"/>
</dbReference>
<dbReference type="InterPro" id="IPR000346">
    <property type="entry name" value="Hyperglycemic1"/>
</dbReference>
<dbReference type="PANTHER" id="PTHR35981">
    <property type="entry name" value="ION TRANSPORT PEPTIDE, ISOFORM C"/>
    <property type="match status" value="1"/>
</dbReference>
<dbReference type="PANTHER" id="PTHR35981:SF2">
    <property type="entry name" value="ION TRANSPORT PEPTIDE, ISOFORM C"/>
    <property type="match status" value="1"/>
</dbReference>
<dbReference type="Pfam" id="PF01147">
    <property type="entry name" value="Crust_neurohorm"/>
    <property type="match status" value="1"/>
</dbReference>
<dbReference type="PRINTS" id="PR00548">
    <property type="entry name" value="HYPRGLYCEMC1"/>
</dbReference>
<dbReference type="PRINTS" id="PR00550">
    <property type="entry name" value="HYPRGLYCEMIC"/>
</dbReference>
<dbReference type="SUPFAM" id="SSF81778">
    <property type="entry name" value="Crustacean CHH/MIH/GIH neurohormone"/>
    <property type="match status" value="1"/>
</dbReference>
<dbReference type="PROSITE" id="PS01250">
    <property type="entry name" value="CHH_MIH_GIH"/>
    <property type="match status" value="1"/>
</dbReference>
<evidence type="ECO:0000250" key="1"/>
<evidence type="ECO:0000269" key="2">
    <source>
    </source>
</evidence>
<evidence type="ECO:0000305" key="3"/>
<reference key="1">
    <citation type="journal article" date="2000" name="Peptides">
        <title>A hyperglycemic peptide hormone from the Caribbean shrimp Penaeus (litopenaeus) schmitti.</title>
        <authorList>
            <person name="Huberman A."/>
            <person name="Aguilar M.B."/>
            <person name="Navarro-Quiroga I."/>
            <person name="Ramos L."/>
            <person name="Fernandez I."/>
            <person name="White F.M."/>
            <person name="Hunt D.F."/>
        </authorList>
    </citation>
    <scope>PROTEIN SEQUENCE</scope>
    <scope>AMIDATION AT VAL-72</scope>
    <scope>MASS SPECTROMETRY</scope>
    <source>
        <tissue>Sinus gland</tissue>
    </source>
</reference>
<reference key="2">
    <citation type="journal article" date="2000" name="Peptides">
        <authorList>
            <person name="Huberman A."/>
            <person name="Aguilar M.B."/>
            <person name="Navarro-Quiroga I."/>
            <person name="Ramos L."/>
            <person name="Fernandez I."/>
            <person name="White F.M."/>
            <person name="Hunt D.F."/>
            <person name="Schabanowitz J."/>
        </authorList>
    </citation>
    <scope>ERRATUM OF PUBMED:10793213</scope>
</reference>
<accession>P59685</accession>
<sequence>ANFDPSCTGVYDRELLGRLSRLCDDCYNVFREPKVATECRSNCFYNPVFVQCLEYLIPADLHEEYQAHVQTV</sequence>
<protein>
    <recommendedName>
        <fullName>Crustacean hyperglycemic hormone</fullName>
        <shortName>CHH</shortName>
    </recommendedName>
</protein>
<comment type="function">
    <text>Hormone found in the sinus gland of isopods and decapods which controls the blood sugar level. Has a secretagogue action over the amylase released from the midgut gland. May act as a stress hormone and may be involved in the control of molting and reproduction.</text>
</comment>
<comment type="subcellular location">
    <subcellularLocation>
        <location>Secreted</location>
    </subcellularLocation>
</comment>
<comment type="mass spectrometry"/>
<comment type="similarity">
    <text evidence="3">Belongs to the arthropod CHH/MIH/GIH/VIH hormone family.</text>
</comment>
<keyword id="KW-0027">Amidation</keyword>
<keyword id="KW-0119">Carbohydrate metabolism</keyword>
<keyword id="KW-0903">Direct protein sequencing</keyword>
<keyword id="KW-1015">Disulfide bond</keyword>
<keyword id="KW-0313">Glucose metabolism</keyword>
<keyword id="KW-0372">Hormone</keyword>
<keyword id="KW-0527">Neuropeptide</keyword>
<keyword id="KW-0964">Secreted</keyword>